<comment type="function">
    <text evidence="1 2 4 6 7 8 9 10 11 12 13 15 17 18 20 22 23 24 25 26 27 28 29 31 32 33">Plays a role as a neuroprotective factor (PubMed:11371646, PubMed:11717357, PubMed:12154011, PubMed:12787071, PubMed:12860203, PubMed:19386761). Protects against neuronal cell death induced by multiple different familial Alzheimer disease genes and amyloid-beta proteins in Alzheimer disease (PubMed:11371646, PubMed:11717357, PubMed:12154011, PubMed:12787071, PubMed:12860203, PubMed:19386761). Mediates its neuroprotective effect by interacting with a receptor complex composed of IL6ST/GP130, IL27RA/WSX1 and CNTFR (PubMed:19386761). Also acts as a ligand for G-protein coupled receptors FPR2/FPRL1 and FPR3/FPRL2 (PubMed:15465011). Inhibits amyloid-beta protein 40 fibril formation (PubMed:27349871). Also inhibits amyloid-beta protein 42 fibril formation (PubMed:28282805). Suppresses apoptosis by binding to BAX and preventing the translocation of BAX from the cytosol to mitochondria (PubMed:12732850, PubMed:26990160). Also suppresses apoptosis by binding to BID and inhibiting the interaction of BID with BAX and BAK which prevents oligomerization of BAX and BAK and suppresses release of apoptogenic proteins from mitochondria (PubMed:15661737). Forms fibers with BAX and also with BID, inducing BAX and BID conformational changes and sequestering them into the fibers which prevents their activation (PubMed:31690630, PubMed:33106313). Can also suppress apoptosis by interacting with BIM isoform BimEL, inhibiting BimEL-induced activation of BAX, blocking oligomerization of BAX and BAK, and preventing release of apoptogenic proteins from mitochondria (PubMed:15661735). Plays a role in up-regulation of anti-apoptotic protein BIRC6/APOLLON, leading to inhibition of neuronal cell death (PubMed:25138702). Binds to IGFBP3 and specifically blocks IGFBP3-induced cell death (PubMed:14561895, PubMed:26216267). Competes with importin KPNB1 for binding to IGFBP3 which is likely to block IGFBP3 nuclear import (PubMed:26216267). Induces chemotaxis of mononuclear phagocytes via FPR2/FPRL1 (PubMed:15153530). Reduces aggregation and fibrillary formation by suppressing the effect of APP on mononuclear phagocytes and acts by competitively inhibiting the access of FPR2 to APP (PubMed:15153530). Protects retinal pigment epithelium (RPE) cells against oxidative stress-induced and endoplasmic reticulum (ER) stress-induced apoptosis (PubMed:26990160, PubMed:27783653). Promotes mitochondrial biogenesis in RPE cells following oxidative stress and promotes STAT3 phosphorylation which leads to inhibition of CASP3 release (PubMed:26990160). Also reduces CASP4 levels in RPE cells, suppresses ER stress-induced mitochondrial superoxide production and plays a role in up-regulation of mitochondrial glutathione (PubMed:27783653). Reduces testicular hormone deprivation-induced apoptosis of germ cells at the nonandrogen-sensitive stages of the seminiferous epithelium cycle (PubMed:19952275). Protects endothelial cells against free fatty acid-induced inflammation by suppressing oxidative stress, reducing expression of TXNIP and inhibiting activation of the NLRP3 inflammasome which inhibits expression of pro-inflammatory cytokines IL1B and IL18 (PubMed:32923762). Protects against high glucose-induced endothelial cell dysfunction by mediating activation of ERK5 which leads to increased expression of transcription factor KLF2 and prevents monocyte adhesion to endothelial cells (PubMed:30029058). Inhibits the inflammatory response in astrocytes (PubMed:23277413). Increases the expression of PPARGC1A/PGC1A in pancreatic beta cells which promotes mitochondrial biogenesis (PubMed:29432738). Increases insulin sensitivity (PubMed:19623253).</text>
</comment>
<comment type="subunit">
    <text evidence="5 6 7 8 9 12 13 17 21 23 27 31 33">Homodimer (PubMed:12787071, PubMed:12860203). Interacts with amyloid-beta protein 42 (Abeta42); the interaction prevents Abeta42 fibril formation (PubMed:28282805). Interacts with BAX; forms fibers with BAX which results in BAX conformational changes and sequestering of BAX into the fibers, preventing BAX activation (PubMed:12732850, PubMed:31690630). Interacts with both full-length BID and cleaved BID p15; forms fibers with BID which results in BID conformational changes and sequestering of BID into the fibers, preventing BID activation (PubMed:15661737, PubMed:33106313). Interacts with BIM isoform BimEL but not with BIM isoforms BimL or BimS; the interaction prevents BIM-induced apoptosis (PubMed:15661735). Interacts with IGFBP3; competes with importin KPNB1 for binding to IGFBP3, blocking IGFBP3 nuclear import (PubMed:14561895, PubMed:19623253, PubMed:26216267). Interacts with TRIM11 (PubMed:12670303). Interacts with MPP8 (PubMed:23532874).</text>
</comment>
<comment type="interaction">
    <interactant intactId="EBI-8643752">
        <id>Q8IVG9</id>
    </interactant>
    <interactant intactId="EBI-821758">
        <id>PRO_0000000092</id>
        <label>APP</label>
        <dbReference type="UniProtKB" id="P05067"/>
    </interactant>
    <organismsDiffer>false</organismsDiffer>
    <experiments>4</experiments>
</comment>
<comment type="interaction">
    <interactant intactId="EBI-8643752">
        <id>Q8IVG9</id>
    </interactant>
    <interactant intactId="EBI-516580">
        <id>Q07812</id>
        <label>BAX</label>
    </interactant>
    <organismsDiffer>false</organismsDiffer>
    <experiments>5</experiments>
</comment>
<comment type="interaction">
    <interactant intactId="EBI-8643752">
        <id>Q8IVG9</id>
    </interactant>
    <interactant intactId="EBI-715709">
        <id>P17936</id>
        <label>IGFBP3</label>
    </interactant>
    <organismsDiffer>false</organismsDiffer>
    <experiments>7</experiments>
</comment>
<comment type="subcellular location">
    <subcellularLocation>
        <location evidence="1 8 17 24">Secreted</location>
    </subcellularLocation>
    <subcellularLocation>
        <location evidence="1 5 13 19 24">Cytoplasm</location>
    </subcellularLocation>
    <subcellularLocation>
        <location evidence="19 30">Cell projection</location>
        <location evidence="19 30">Cilium</location>
        <location evidence="19 30">Flagellum</location>
    </subcellularLocation>
    <subcellularLocation>
        <location evidence="19">Nucleus</location>
    </subcellularLocation>
    <subcellularLocation>
        <location evidence="19 24">Mitochondrion</location>
    </subcellularLocation>
    <text evidence="19 24 30">Localizes to the sperm flagellum where it is highly concentrated in the midpiece (PubMed:20542501, PubMed:30920769). Detected in the cytoplasm and nucleus of spermatocytes and spermatids (PubMed:20542501). Also detected in sperm mitochondria (PubMed:20542501). In retinal pigment epithelium cells, detected in cytoplasm and mitochondria (PubMed:26990160).</text>
</comment>
<comment type="tissue specificity">
    <text evidence="1 3 16 19 24 30">Expressed in testis, seminal plasma and sperm (at protein level) (PubMed:20542501, PubMed:30920769). Higher seminal plasma levels are associated with normospermia than with oligospermia, asthenospermia or oligoasthenospermia (at protein level) (PubMed:30920769). Higher sperm levels are associated with normospermia than with asthenospermia (at protein level) (PubMed:30920769). Expressed in retinal epithelial cells (at protein level) (PubMed:26990160). Expressed in the heart, skeletal muscle, kidney and liver. Lesser but significant expression is observed in the brain and the gastrointestinal tract. Expressed in the AD brain, where it is found in some of the large intact neurons of the occipital lobes and small and round reactive glial cells in the hippocampus.</text>
</comment>
<comment type="developmental stage">
    <text evidence="17">Levels decline with increasing age.</text>
</comment>
<comment type="induction">
    <text evidence="16">Release is regulated by intracellular mechanism. The intracellular level is regulated by TRIM11 through proteasome-mediated degradation.</text>
</comment>
<comment type="domain">
    <text evidence="14">Largely unstructured in aqueous solution.</text>
</comment>
<comment type="mass spectrometry"/>
<comment type="similarity">
    <text evidence="36">Belongs to the humanin family.</text>
</comment>
<comment type="caution">
    <text evidence="37 38">The humanin peptide described here has been shown to be biologically active but is the product of a mitochondrial gene, MT-RNR2 (PubMed:12009529). If translation of the mRNA occurs in the mitochondrion rather than in the cytoplasm, then the usage of the mitochondrial genetic code would lead to the production of a shorter peptide lacking the last three C-terminal residues. The mechanisms allowing the production and the secretion of humanin remain unclear. The possibility exists that the physiologically active humanin peptide is encoded by one of the related genes present in the nuclear genome (PubMed:19477263).</text>
</comment>
<sequence>MAPRGFSCLLLLTSEIDLPVKRRA</sequence>
<reference key="1">
    <citation type="journal article" date="2001" name="Proc. Natl. Acad. Sci. U.S.A.">
        <title>A rescue factor abolishing neuronal cell death by a wide spectrum of familial Alzheimer's disease genes and Abeta.</title>
        <authorList>
            <person name="Hashimoto Y."/>
            <person name="Niikura T."/>
            <person name="Tajima H."/>
            <person name="Yasukawa T."/>
            <person name="Sudo H."/>
            <person name="Ito Y."/>
            <person name="Kita Y."/>
            <person name="Kawasumi M."/>
            <person name="Kouyama K."/>
            <person name="Doyu M."/>
            <person name="Sobue G."/>
            <person name="Koide T."/>
            <person name="Tsuji S."/>
            <person name="Lang J."/>
            <person name="Kurokawa K."/>
            <person name="Nashimoto I."/>
        </authorList>
    </citation>
    <scope>NUCLEOTIDE SEQUENCE [MRNA]</scope>
    <scope>FUNCTION</scope>
    <scope>SUBCELLULAR LOCATION</scope>
    <scope>TISSUE SPECIFICITY</scope>
    <scope>MUTAGENESIS OF LEU-9</scope>
    <source>
        <tissue>Brain</tissue>
    </source>
</reference>
<reference key="2">
    <citation type="journal article" date="2003" name="Proc. Natl. Acad. Sci. U.S.A.">
        <title>Interaction between the Alzheimer's survival peptide humanin and insulin-like growth factor-binding protein 3 regulates cell survival and apoptosis.</title>
        <authorList>
            <person name="Ikonen M."/>
            <person name="Liu B."/>
            <person name="Hashimoto Y."/>
            <person name="Ma L."/>
            <person name="Lee K.W."/>
            <person name="Niikura T."/>
            <person name="Nishimoto I."/>
            <person name="Cohen P."/>
        </authorList>
    </citation>
    <scope>NUCLEOTIDE SEQUENCE [MRNA]</scope>
    <scope>FUNCTION</scope>
    <scope>INTERACTION WITH IGFBP3</scope>
    <scope>MUTAGENESIS OF PHE-6</scope>
</reference>
<reference key="3">
    <citation type="journal article" date="2004" name="Genome Res.">
        <title>The status, quality, and expansion of the NIH full-length cDNA project: the Mammalian Gene Collection (MGC).</title>
        <authorList>
            <consortium name="The MGC Project Team"/>
        </authorList>
    </citation>
    <scope>NUCLEOTIDE SEQUENCE [LARGE SCALE MRNA]</scope>
</reference>
<reference key="4">
    <citation type="journal article" date="2001" name="J. Neurosci.">
        <title>Detailed characterization of neuroprotection by a rescue factor humanin against various Alzheimer's disease-relevant insults.</title>
        <authorList>
            <person name="Hashimoto Y."/>
            <person name="Niikura T."/>
            <person name="Ito Y."/>
            <person name="Sudo H."/>
            <person name="Hata M."/>
            <person name="Arakawa E."/>
            <person name="Abe Y."/>
            <person name="Kita Y."/>
            <person name="Nishimoto I."/>
        </authorList>
    </citation>
    <scope>FUNCTION</scope>
    <scope>MUTAGENESIS OF 1-MET-ALA-2; 1-MET--PRO-3; PRO-3; 4-ARG--MET-6; CYS-8; LEU-9; LEU-12; THR-13; SER-14; PRO-19; 19-PRO--ALA-24 AND 20-VAL--ALA-24</scope>
</reference>
<reference key="5">
    <citation type="journal article" date="2002" name="FASEB J.">
        <title>A novel rat gene encoding a Humanin-like peptide endowed with broad neuroprotective activity.</title>
        <authorList>
            <person name="Caricasole A."/>
            <person name="Bruno V."/>
            <person name="Cappuccio I."/>
            <person name="Melchiorri D."/>
            <person name="Copani A."/>
            <person name="Nicoletti F."/>
        </authorList>
    </citation>
    <scope>FUNCTION</scope>
</reference>
<reference key="6">
    <citation type="journal article" date="2002" name="Neurosci. Lett.">
        <title>Evidence for in vivo production of Humanin peptide, a neuroprotective factor against Alzheimer's disease-related insults.</title>
        <authorList>
            <person name="Tajima H."/>
            <person name="Niikura T."/>
            <person name="Hashimoto Y."/>
            <person name="Ito Y."/>
            <person name="Kita Y."/>
            <person name="Terashita K."/>
            <person name="Yamazaki K."/>
            <person name="Koto A."/>
            <person name="Aiso S."/>
            <person name="Nishimoto I."/>
        </authorList>
    </citation>
    <scope>EVIDENCE OF IN VIVO EXPRESSION</scope>
    <scope>TISSUE SPECIFICITY</scope>
    <source>
        <tissue>Brain</tissue>
    </source>
</reference>
<reference key="7">
    <citation type="journal article" date="2003" name="Eur. J. Neurosci.">
        <title>A tripartite motif protein TRIM11 binds and destabilizes Humanin, a neuroprotective peptide against Alzheimer's disease-relevant insults.</title>
        <authorList>
            <person name="Niikura T."/>
            <person name="Hashimoto Y."/>
            <person name="Tajima H."/>
            <person name="Ishizaka M."/>
            <person name="Yamagishi Y."/>
            <person name="Kawasumi M."/>
            <person name="Nawa M."/>
            <person name="Terashita K."/>
            <person name="Aiso S."/>
            <person name="Nishimoto I."/>
        </authorList>
    </citation>
    <scope>INTERACTION WITH TRIM11</scope>
    <scope>SUBCELLULAR LOCATION</scope>
</reference>
<reference key="8">
    <citation type="journal article" date="2003" name="J. Neurochem.">
        <title>Two serine residues distinctly regulate the rescue function of Humanin, an inhibiting factor of Alzheimer's disease-related neurotoxicity: functional potentiation by isomerization and dimerization.</title>
        <authorList>
            <person name="Terashita K."/>
            <person name="Hashimoto Y."/>
            <person name="Niikura T."/>
            <person name="Tajima H."/>
            <person name="Yamagishi Y."/>
            <person name="Ishizaka M."/>
            <person name="Kawasumi M."/>
            <person name="Chiba T."/>
            <person name="Kanekura K."/>
            <person name="Yamada M."/>
            <person name="Nawa M."/>
            <person name="Kita Y."/>
            <person name="Aiso S."/>
            <person name="Nishimoto I."/>
        </authorList>
    </citation>
    <scope>FUNCTION</scope>
    <scope>SUBUNIT</scope>
    <scope>MUTAGENESIS OF SER-7 AND SER-14</scope>
</reference>
<reference key="9">
    <citation type="journal article" date="2003" name="Nature">
        <title>Humanin peptide suppresses apoptosis by interfering with Bax activation.</title>
        <authorList>
            <person name="Guo B."/>
            <person name="Zhai D."/>
            <person name="Cabezas E."/>
            <person name="Welsh K."/>
            <person name="Nouraini S."/>
            <person name="Satterthwait A.C."/>
            <person name="Reed J.C."/>
        </authorList>
    </citation>
    <scope>FUNCTION</scope>
    <scope>INTERACTION WITH BAX</scope>
    <scope>MUTAGENESIS OF 1-MET--PHE-6; 18-LEU--ALA-24; CYS-8 AND LEU-9</scope>
</reference>
<reference key="10">
    <citation type="journal article" date="2003" name="Peptides">
        <title>Identification of essential amino acids in Humanin, a neuroprotective factor against Alzheimer's disease-relevant insults.</title>
        <authorList>
            <person name="Yamagishi Y."/>
            <person name="Hashimoto Y."/>
            <person name="Niikura T."/>
            <person name="Nishimoto I."/>
        </authorList>
    </citation>
    <scope>FUNCTION</scope>
    <scope>SUBUNIT</scope>
    <scope>SUBCELLULAR LOCATION</scope>
    <scope>MUTAGENESIS OF PRO-3; SER-7; CYS-8; LEU-9; LEU-10; LEU-11; LEU-12; THR-13; SER-14; PRO-19 AND VAL-20</scope>
</reference>
<reference key="11">
    <citation type="journal article" date="2004" name="Biochem. Biophys. Res. Commun.">
        <title>N-Formylated humanin activates both formyl peptide receptor-like 1 and 2.</title>
        <authorList>
            <person name="Harada M."/>
            <person name="Habata Y."/>
            <person name="Hosoya M."/>
            <person name="Nishi K."/>
            <person name="Fujii R."/>
            <person name="Kobayashi M."/>
            <person name="Hinuma S."/>
        </authorList>
    </citation>
    <scope>FUNCTION</scope>
    <scope>MUTAGENESIS OF SER-14</scope>
</reference>
<reference key="12">
    <citation type="journal article" date="2004" name="J. Immunol.">
        <title>Humanin, a newly identified neuroprotective factor, uses the G protein-coupled formylpeptide receptor-like-1 as a functional receptor.</title>
        <authorList>
            <person name="Ying G."/>
            <person name="Iribarren P."/>
            <person name="Zhou Y."/>
            <person name="Gong W."/>
            <person name="Zhang N."/>
            <person name="Yu Z.-X."/>
            <person name="Le Y."/>
            <person name="Cui Y."/>
            <person name="Wang J.M."/>
        </authorList>
    </citation>
    <scope>FUNCTION</scope>
</reference>
<reference key="13">
    <citation type="journal article" date="2005" name="J. Biol. Chem.">
        <title>Humanin binds and nullifies Bid activity by blocking its activation of Bax and Bak.</title>
        <authorList>
            <person name="Zhai D."/>
            <person name="Luciano F."/>
            <person name="Zhu X."/>
            <person name="Guo B."/>
            <person name="Satterthwait A.C."/>
            <person name="Reed J.C."/>
        </authorList>
    </citation>
    <scope>FUNCTION</scope>
    <scope>INTERACTION WITH BID</scope>
    <scope>SUBCELLULAR LOCATION</scope>
    <scope>MUTAGENESIS OF CYS-8 AND SER-14</scope>
</reference>
<reference key="14">
    <citation type="journal article" date="2005" name="J. Biol. Chem.">
        <title>Cytoprotective peptide humanin binds and inhibits proapoptotic Bcl-2/Bax family protein BimEL.</title>
        <authorList>
            <person name="Luciano F."/>
            <person name="Zhai D."/>
            <person name="Zhu X."/>
            <person name="Bailly-Maitre B."/>
            <person name="Ricci J.E."/>
            <person name="Satterthwait A.C."/>
            <person name="Reed J.C."/>
        </authorList>
    </citation>
    <scope>FUNCTION</scope>
    <scope>INTERACTION WITH BIM</scope>
    <scope>SUBCELLULAR LOCATION</scope>
    <scope>MUTAGENESIS OF CYS-8</scope>
</reference>
<reference key="15">
    <citation type="journal article" date="2009" name="Genomics">
        <title>Evidence for potential functionality of nuclearly-encoded humanin isoforms.</title>
        <authorList>
            <person name="Bodzioch M."/>
            <person name="Lapicka-Bodzioch K."/>
            <person name="Zapala B."/>
            <person name="Kamysz W."/>
            <person name="Kiec-Wilk B."/>
            <person name="Dembinska-Kiec A."/>
        </authorList>
    </citation>
    <scope>TISSUE SPECIFICITY</scope>
    <scope>INDUCTION</scope>
</reference>
<reference key="16">
    <citation type="journal article" date="2009" name="Mol. Biol. Cell">
        <title>Humanin inhibits neuronal cell death by interacting with a cytokine receptor complex or complexes involving CNTF receptor alpha/WSX-1/gp130.</title>
        <authorList>
            <person name="Hashimoto Y."/>
            <person name="Kurita M."/>
            <person name="Aiso S."/>
            <person name="Nishimoto I."/>
            <person name="Matsuoka M."/>
        </authorList>
    </citation>
    <scope>FUNCTION</scope>
</reference>
<reference key="17">
    <citation type="journal article" date="2009" name="PLoS ONE">
        <title>Humanin: a novel central regulator of peripheral insulin action.</title>
        <authorList>
            <person name="Muzumdar R.H."/>
            <person name="Huffman D.M."/>
            <person name="Atzmon G."/>
            <person name="Buettner C."/>
            <person name="Cobb L.J."/>
            <person name="Fishman S."/>
            <person name="Budagov T."/>
            <person name="Cui L."/>
            <person name="Einstein F.H."/>
            <person name="Poduval A."/>
            <person name="Hwang D."/>
            <person name="Barzilai N."/>
            <person name="Cohen P."/>
        </authorList>
    </citation>
    <scope>FUNCTION</scope>
    <scope>INTERACTION WITH IGFBP3</scope>
    <scope>SUBCELLULAR LOCATION</scope>
    <scope>DEVELOPMENTAL STAGE</scope>
    <scope>MUTAGENESIS OF PHE-6 AND SER-7</scope>
</reference>
<reference key="18">
    <citation type="journal article" date="2010" name="Endocrinology">
        <title>Opposing roles of insulin-like growth factor binding protein 3 and humanin in the regulation of testicular germ cell apoptosis.</title>
        <authorList>
            <person name="Lue Y."/>
            <person name="Swerdloff R."/>
            <person name="Liu Q."/>
            <person name="Mehta H."/>
            <person name="Hikim A.S."/>
            <person name="Lee K.W."/>
            <person name="Jia Y."/>
            <person name="Hwang D."/>
            <person name="Cobb L.J."/>
            <person name="Cohen P."/>
            <person name="Wang C."/>
        </authorList>
    </citation>
    <scope>FUNCTION</scope>
</reference>
<reference key="19">
    <citation type="journal article" date="2010" name="Fertil. Steril.">
        <title>Immunolocalization of humanin in human sperm and testis.</title>
        <authorList>
            <person name="Moretti E."/>
            <person name="Giannerini V."/>
            <person name="Rossini L."/>
            <person name="Matsuoka M."/>
            <person name="Trabalzini L."/>
            <person name="Collodel G."/>
        </authorList>
    </citation>
    <scope>SUBCELLULAR LOCATION</scope>
    <scope>TISSUE SPECIFICITY</scope>
</reference>
<reference key="20">
    <citation type="journal article" date="2013" name="J. Pept. Sci.">
        <title>Humanin binds MPP8: mapping interaction sites of the peptide and protein.</title>
        <authorList>
            <person name="Maximov V.V."/>
            <person name="Martynenko A.V."/>
            <person name="Arman I.P."/>
            <person name="Tarantul V.Z."/>
        </authorList>
    </citation>
    <scope>INTERACTION WITH MPP8</scope>
</reference>
<reference key="21">
    <citation type="journal article" date="2013" name="Neurochem. Res.">
        <title>Neuroprotective Peptide humanin inhibits inflammatory response in astrocytes induced by lipopolysaccharide.</title>
        <authorList>
            <person name="Zhao S.T."/>
            <person name="Zhao L."/>
            <person name="Li J.H."/>
        </authorList>
    </citation>
    <scope>FUNCTION</scope>
</reference>
<reference key="22">
    <citation type="journal article" date="2014" name="Mol. Cell. Biochem.">
        <title>Apollon/Bruce is upregulated by Humanin.</title>
        <authorList>
            <person name="Hashimoto Y."/>
            <person name="Takeshita Y."/>
            <person name="Naito M."/>
            <person name="Uchino H."/>
            <person name="Matsuoka M."/>
        </authorList>
    </citation>
    <scope>FUNCTION</scope>
</reference>
<reference key="23">
    <citation type="journal article" date="2015" name="Protein Pept. Lett.">
        <title>Humanin Peptide Binds to Insulin-Like Growth Factor-Binding Protein 3 (IGFBP3) and Regulates Its Interaction with Importin-beta.</title>
        <authorList>
            <person name="Njomen E."/>
            <person name="Evans H.G."/>
            <person name="Gedara S.H."/>
            <person name="Heyl D.L."/>
        </authorList>
    </citation>
    <scope>FUNCTION</scope>
    <scope>INTERACTION WITH IGFBP3</scope>
</reference>
<reference key="24">
    <citation type="journal article" date="2016" name="Invest. Ophthalmol. Vis. Sci.">
        <title>The Mitochondrial-Derived Peptide Humanin Protects RPE Cells From Oxidative Stress, Senescence, and Mitochondrial Dysfunction.</title>
        <authorList>
            <person name="Sreekumar P.G."/>
            <person name="Ishikawa K."/>
            <person name="Spee C."/>
            <person name="Mehta H.H."/>
            <person name="Wan J."/>
            <person name="Yen K."/>
            <person name="Cohen P."/>
            <person name="Kannan R."/>
            <person name="Hinton D.R."/>
        </authorList>
    </citation>
    <scope>FUNCTION</scope>
    <scope>SUBCELLULAR LOCATION</scope>
    <scope>TISSUE SPECIFICITY</scope>
</reference>
<reference key="25">
    <citation type="journal article" date="2016" name="PLoS ONE">
        <title>Humanin Protects RPE Cells from Endoplasmic Reticulum Stress-Induced Apoptosis by Upregulation of Mitochondrial Glutathione.</title>
        <authorList>
            <person name="Matsunaga D."/>
            <person name="Sreekumar P.G."/>
            <person name="Ishikawa K."/>
            <person name="Terasaki H."/>
            <person name="Barron E."/>
            <person name="Cohen P."/>
            <person name="Kannan R."/>
            <person name="Hinton D.R."/>
        </authorList>
    </citation>
    <scope>FUNCTION</scope>
</reference>
<reference key="26">
    <citation type="journal article" date="2017" name="J. Alzheimers Dis.">
        <title>Humanin Specifically Interacts with Amyloid-beta Oligomers and Counteracts Their in vivo Toxicity.</title>
        <authorList>
            <person name="Romeo M."/>
            <person name="Stravalaci M."/>
            <person name="Beeg M."/>
            <person name="Rossi A."/>
            <person name="Fiordaliso F."/>
            <person name="Corbelli A."/>
            <person name="Salmona M."/>
            <person name="Gobbi M."/>
            <person name="Cagnotto A."/>
            <person name="Diomede L."/>
        </authorList>
    </citation>
    <scope>FUNCTION</scope>
    <scope>INTERACTION WITH AMYLOID-BETA PROTEIN 42</scope>
    <scope>MASS SPECTROMETRY</scope>
    <scope>MUTAGENESIS OF SER-14</scope>
</reference>
<reference key="27">
    <citation type="journal article" date="2018" name="Biochem. Biophys. Res. Commun.">
        <title>Humanin promotes mitochondrial biogenesis in pancreatic MIN6 beta-cells.</title>
        <authorList>
            <person name="Qin Q."/>
            <person name="Jin J."/>
            <person name="He F."/>
            <person name="Zheng Y."/>
            <person name="Li T."/>
            <person name="Zhang Y."/>
            <person name="He J."/>
        </authorList>
    </citation>
    <scope>FUNCTION</scope>
</reference>
<reference key="28">
    <citation type="journal article" date="2018" name="Mol. Immunol.">
        <title>Humanin prevents high glucose-induced monocyte adhesion to endothelial cells by targeting KLF2.</title>
        <authorList>
            <person name="Wang X."/>
            <person name="Wu Z."/>
            <person name="He Y."/>
            <person name="Zhang H."/>
            <person name="Tian L."/>
            <person name="Zheng C."/>
            <person name="Shang T."/>
            <person name="Zhu Q."/>
            <person name="Li D."/>
            <person name="He Y."/>
        </authorList>
    </citation>
    <scope>FUNCTION</scope>
</reference>
<reference key="29">
    <citation type="journal article" date="2019" name="Andrology">
        <title>Humanin levels in human seminal plasma and spermatozoa are related to sperm quality.</title>
        <authorList>
            <person name="Rao M."/>
            <person name="Wu Z."/>
            <person name="Wen Y."/>
            <person name="Wang R."/>
            <person name="Zhao S."/>
            <person name="Tang L."/>
        </authorList>
    </citation>
    <scope>SUBCELLULAR LOCATION</scope>
    <scope>TISSUE SPECIFICITY</scope>
</reference>
<reference key="30">
    <citation type="journal article" date="2019" name="J. Biol. Chem.">
        <title>Humanin induces conformational changes in the apoptosis regulator BAX and sequesters it into fibers, preventing mitochondrial outer-membrane permeabilization.</title>
        <authorList>
            <person name="Morris D.L."/>
            <person name="Kastner D.W."/>
            <person name="Johnson S."/>
            <person name="Strub M.P."/>
            <person name="He Y."/>
            <person name="Bleck C.K.E."/>
            <person name="Lee D.Y."/>
            <person name="Tjandra N."/>
        </authorList>
    </citation>
    <scope>FUNCTION</scope>
    <scope>MUTAGENESIS OF CYS-8 AND SER-14</scope>
</reference>
<reference key="31">
    <citation type="journal article" date="2020" name="ACS Omega">
        <title>Humanin Ameliorates Free Fatty Acid-Induced Endothelial Inflammation by Suppressing the NLRP3 Inflammasome.</title>
        <authorList>
            <person name="Li W."/>
            <person name="Zhang D."/>
            <person name="Yuan W."/>
            <person name="Wang C."/>
            <person name="Huang Q."/>
            <person name="Luo J."/>
        </authorList>
    </citation>
    <scope>FUNCTION</scope>
</reference>
<reference key="32">
    <citation type="journal article" date="2020" name="J. Biol. Chem.">
        <title>Humanin selectively prevents the activation of pro-apoptotic protein BID by sequestering it into fibers.</title>
        <authorList>
            <person name="Morris D.L."/>
            <person name="Johnson S."/>
            <person name="Bleck C.K.E."/>
            <person name="Lee D.Y."/>
            <person name="Tjandra N."/>
        </authorList>
    </citation>
    <scope>FUNCTION</scope>
    <scope>MUTAGENESIS OF CYS-8 AND SER-14</scope>
</reference>
<reference key="33">
    <citation type="journal article" date="2005" name="Biochem. Biophys. Res. Commun.">
        <title>Solution structure of humanin, a peptide against Alzheimer's disease-related neurotoxicity.</title>
        <authorList>
            <person name="Benaki D."/>
            <person name="Zikos C."/>
            <person name="Evangelou A."/>
            <person name="Livaniou E."/>
            <person name="Vlassi M."/>
            <person name="Mikros E."/>
            <person name="Pelecanou M."/>
        </authorList>
    </citation>
    <scope>STRUCTURE BY NMR</scope>
    <scope>DOMAIN</scope>
</reference>
<reference key="34">
    <citation type="journal article" date="2006" name="Biochem. Biophys. Res. Commun.">
        <title>Solution structure of Ser14Gly-humanin, a potent rescue factor against neuronal cell death in Alzheimer's disease.</title>
        <authorList>
            <person name="Benaki D."/>
            <person name="Zikos C."/>
            <person name="Evangelou A."/>
            <person name="Livaniou E."/>
            <person name="Vlassi M."/>
            <person name="Mikros E."/>
            <person name="Pelecanou M."/>
        </authorList>
    </citation>
    <scope>STRUCTURE BY NMR OF MUTANT GLY-14</scope>
</reference>
<reference evidence="40" key="35">
    <citation type="journal article" date="2016" name="Biochem. Biophys. Res. Commun.">
        <title>Solution NMR structure and inhibitory effect against amyloid-beta fibrillation of Humanin containing a d-isomerized serine residue.</title>
        <authorList>
            <person name="Alsanousi N."/>
            <person name="Sugiki T."/>
            <person name="Furuita K."/>
            <person name="So M."/>
            <person name="Lee Y.H."/>
            <person name="Fujiwara T."/>
            <person name="Kojima C."/>
        </authorList>
    </citation>
    <scope>STRUCTURE BY NMR WITH D-SER-14</scope>
    <scope>FUNCTION</scope>
    <scope>MUTAGENESIS OF SER-14</scope>
</reference>
<name>HUNIN_HUMAN</name>
<proteinExistence type="evidence at protein level"/>
<evidence type="ECO:0000269" key="1">
    <source>
    </source>
</evidence>
<evidence type="ECO:0000269" key="2">
    <source>
    </source>
</evidence>
<evidence type="ECO:0000269" key="3">
    <source>
    </source>
</evidence>
<evidence type="ECO:0000269" key="4">
    <source>
    </source>
</evidence>
<evidence type="ECO:0000269" key="5">
    <source>
    </source>
</evidence>
<evidence type="ECO:0000269" key="6">
    <source>
    </source>
</evidence>
<evidence type="ECO:0000269" key="7">
    <source>
    </source>
</evidence>
<evidence type="ECO:0000269" key="8">
    <source>
    </source>
</evidence>
<evidence type="ECO:0000269" key="9">
    <source>
    </source>
</evidence>
<evidence type="ECO:0000269" key="10">
    <source>
    </source>
</evidence>
<evidence type="ECO:0000269" key="11">
    <source>
    </source>
</evidence>
<evidence type="ECO:0000269" key="12">
    <source>
    </source>
</evidence>
<evidence type="ECO:0000269" key="13">
    <source>
    </source>
</evidence>
<evidence type="ECO:0000269" key="14">
    <source>
    </source>
</evidence>
<evidence type="ECO:0000269" key="15">
    <source>
    </source>
</evidence>
<evidence type="ECO:0000269" key="16">
    <source>
    </source>
</evidence>
<evidence type="ECO:0000269" key="17">
    <source>
    </source>
</evidence>
<evidence type="ECO:0000269" key="18">
    <source>
    </source>
</evidence>
<evidence type="ECO:0000269" key="19">
    <source>
    </source>
</evidence>
<evidence type="ECO:0000269" key="20">
    <source>
    </source>
</evidence>
<evidence type="ECO:0000269" key="21">
    <source>
    </source>
</evidence>
<evidence type="ECO:0000269" key="22">
    <source>
    </source>
</evidence>
<evidence type="ECO:0000269" key="23">
    <source>
    </source>
</evidence>
<evidence type="ECO:0000269" key="24">
    <source>
    </source>
</evidence>
<evidence type="ECO:0000269" key="25">
    <source>
    </source>
</evidence>
<evidence type="ECO:0000269" key="26">
    <source>
    </source>
</evidence>
<evidence type="ECO:0000269" key="27">
    <source>
    </source>
</evidence>
<evidence type="ECO:0000269" key="28">
    <source>
    </source>
</evidence>
<evidence type="ECO:0000269" key="29">
    <source>
    </source>
</evidence>
<evidence type="ECO:0000269" key="30">
    <source>
    </source>
</evidence>
<evidence type="ECO:0000269" key="31">
    <source>
    </source>
</evidence>
<evidence type="ECO:0000269" key="32">
    <source>
    </source>
</evidence>
<evidence type="ECO:0000269" key="33">
    <source>
    </source>
</evidence>
<evidence type="ECO:0000303" key="34">
    <source>
    </source>
</evidence>
<evidence type="ECO:0000303" key="35">
    <source>
    </source>
</evidence>
<evidence type="ECO:0000305" key="36"/>
<evidence type="ECO:0000305" key="37">
    <source>
    </source>
</evidence>
<evidence type="ECO:0000305" key="38">
    <source>
    </source>
</evidence>
<evidence type="ECO:0000312" key="39">
    <source>
        <dbReference type="HGNC" id="HGNC:7471"/>
    </source>
</evidence>
<evidence type="ECO:0007744" key="40">
    <source>
        <dbReference type="PDB" id="5GIW"/>
    </source>
</evidence>
<evidence type="ECO:0007829" key="41">
    <source>
        <dbReference type="PDB" id="1Y32"/>
    </source>
</evidence>
<evidence type="ECO:0007829" key="42">
    <source>
        <dbReference type="PDB" id="2GD3"/>
    </source>
</evidence>
<evidence type="ECO:0007829" key="43">
    <source>
        <dbReference type="PDB" id="7WVX"/>
    </source>
</evidence>
<feature type="chain" id="PRO_0000044146" description="Humanin">
    <location>
        <begin position="1"/>
        <end position="24"/>
    </location>
</feature>
<feature type="region of interest" description="Sufficient to interact with BID and BIM and to suppress BID and BIM activity" evidence="12 13">
    <location>
        <begin position="1"/>
        <end position="12"/>
    </location>
</feature>
<feature type="region of interest" description="Sufficient for neuroprotective activity">
    <location>
        <begin position="3"/>
        <end position="19"/>
    </location>
</feature>
<feature type="region of interest" description="Sufficient to interact with MPP8" evidence="21">
    <location>
        <begin position="5"/>
        <end position="12"/>
    </location>
</feature>
<feature type="region of interest" description="Required for secretion" evidence="8">
    <location>
        <begin position="9"/>
        <end position="11"/>
    </location>
</feature>
<feature type="region of interest" description="Required for secretion" evidence="8">
    <location>
        <begin position="19"/>
        <end position="20"/>
    </location>
</feature>
<feature type="mutagenesis site" description="No effect on binding to BAX." evidence="6">
    <location>
        <begin position="1"/>
        <end position="6"/>
    </location>
</feature>
<feature type="mutagenesis site" description="Abolishes neuroprotective activity." evidence="2">
    <location>
        <begin position="1"/>
        <end position="3"/>
    </location>
</feature>
<feature type="mutagenesis site" description="No effect on neuroprotective activity." evidence="2">
    <location>
        <begin position="1"/>
        <end position="2"/>
    </location>
</feature>
<feature type="mutagenesis site" description="Abolishes neuroprotective activity." evidence="2 8">
    <original>P</original>
    <variation>A</variation>
    <location>
        <position position="3"/>
    </location>
</feature>
<feature type="mutagenesis site" description="Potentiates neuroprotective activity." evidence="2">
    <original>RGF</original>
    <variation>AGA</variation>
    <location>
        <begin position="4"/>
        <end position="6"/>
    </location>
</feature>
<feature type="mutagenesis site" description="Abolishes binding to IGFBP3 and increases insulin sensitivity." evidence="9 17">
    <original>F</original>
    <variation>A</variation>
    <location>
        <position position="6"/>
    </location>
</feature>
<feature type="mutagenesis site" description="Abolishes neuroprotective activity and dimerization. No effect on insulin sensitivity." evidence="7 8 17">
    <original>S</original>
    <variation>A</variation>
    <location>
        <position position="7"/>
    </location>
</feature>
<feature type="mutagenesis site" description="Abolishes neuroprotective activity. Formation of short irregularly shaped fibers with BAX with fibers showing non-uniform diameters. Formation of thin irregularly kinked fibers with BID." evidence="2 6 8 31 33">
    <original>C</original>
    <variation>A</variation>
    <location>
        <position position="8"/>
    </location>
</feature>
<feature type="mutagenesis site" description="Abolishes neuroprotective activity." evidence="2 6">
    <original>C</original>
    <variation>D</variation>
    <variation>E</variation>
    <variation>F</variation>
    <variation>G</variation>
    <variation>I</variation>
    <variation>L</variation>
    <variation>M</variation>
    <variation>N</variation>
    <variation>Q</variation>
    <variation>S</variation>
    <variation>T</variation>
    <variation>V</variation>
    <variation>W</variation>
    <variation>Y</variation>
    <location>
        <position position="8"/>
    </location>
</feature>
<feature type="mutagenesis site" description="Significantly reduces neuroprotective activity." evidence="2 6">
    <original>C</original>
    <variation>H</variation>
    <location>
        <position position="8"/>
    </location>
</feature>
<feature type="mutagenesis site" description="No effect on neuroprotective activity." evidence="2 6">
    <original>C</original>
    <variation>K</variation>
    <variation>R</variation>
    <location>
        <position position="8"/>
    </location>
</feature>
<feature type="mutagenesis site" description="Abolishes neuroprotective activity and interaction with BAX and BID. Abolishes BID-induced caspase activation and mitochondrial release of SMAC. Greatly reduced interaction with BIM. Abolishes BIM-induced caspase activation and apoptosis." evidence="2 6 12 13">
    <original>C</original>
    <variation>P</variation>
    <location>
        <position position="8"/>
    </location>
</feature>
<feature type="mutagenesis site" description="Abolishes neuroprotective activity and dimerization." evidence="2 6 8">
    <original>L</original>
    <variation>A</variation>
    <location>
        <position position="9"/>
    </location>
</feature>
<feature type="mutagenesis site" description="Abolishes binding to BAX. Abolishes secretion." evidence="1 2 6 8">
    <original>L</original>
    <variation>R</variation>
    <location>
        <position position="9"/>
    </location>
</feature>
<feature type="mutagenesis site" description="Abolishes secretion." evidence="8">
    <original>L</original>
    <variation>D</variation>
    <location>
        <position position="10"/>
    </location>
</feature>
<feature type="mutagenesis site" description="Abolishes secretion." evidence="8">
    <original>L</original>
    <variation>R</variation>
    <location>
        <position position="10"/>
    </location>
</feature>
<feature type="mutagenesis site" description="Abolishes secretion." evidence="8">
    <original>L</original>
    <variation>R</variation>
    <location>
        <position position="11"/>
    </location>
</feature>
<feature type="mutagenesis site" description="Abolishes neuroprotective activity." evidence="2 8">
    <original>L</original>
    <variation>A</variation>
    <location>
        <position position="12"/>
    </location>
</feature>
<feature type="mutagenesis site" description="Abolishes neuroprotective activity." evidence="2 8">
    <original>T</original>
    <variation>A</variation>
    <location>
        <position position="13"/>
    </location>
</feature>
<feature type="mutagenesis site" description="Abolishes neuroprotective activity." evidence="2 7 8">
    <original>S</original>
    <variation>A</variation>
    <variation>R</variation>
    <variation>W</variation>
    <variation>E</variation>
    <variation>P</variation>
    <location>
        <position position="14"/>
    </location>
</feature>
<feature type="mutagenesis site" description="Potentiates neuroprotective activity. Increased inhibition of amyloid-beta protein 40 fibril formation. Reduced levels of amyloid-beta 42 protein. Affects fiber formation with BAX with fewer fibers running in parallel. Affects fiber formation with BID with formation of shorter fibers. No effect on binding to BID or on BID-induced caspase activation and mitochondrial release of SMAC. Does not affect interaction with FPR2 or FPR3." evidence="2 11 13 25 27 31 33">
    <original>S</original>
    <variation>G</variation>
    <location>
        <position position="14"/>
    </location>
</feature>
<feature type="mutagenesis site" description="Abolishes neuroprotective activity." evidence="2">
    <location>
        <begin position="19"/>
        <end position="24"/>
    </location>
</feature>
<feature type="mutagenesis site" description="Abolishes neuroprotective activity." evidence="2 8">
    <original>P</original>
    <variation>A</variation>
    <location>
        <position position="19"/>
    </location>
</feature>
<feature type="mutagenesis site" description="Abolishes secretion." evidence="8">
    <original>P</original>
    <variation>R</variation>
    <location>
        <position position="19"/>
    </location>
</feature>
<feature type="mutagenesis site" description="No effect on neuroprotective activity." evidence="2">
    <location>
        <begin position="20"/>
        <end position="24"/>
    </location>
</feature>
<feature type="mutagenesis site" description="Abolishes secretion." evidence="8">
    <original>V</original>
    <variation>R</variation>
    <location>
        <position position="20"/>
    </location>
</feature>
<feature type="strand" evidence="43">
    <location>
        <begin position="5"/>
        <end position="10"/>
    </location>
</feature>
<feature type="strand" evidence="42">
    <location>
        <begin position="14"/>
        <end position="17"/>
    </location>
</feature>
<feature type="strand" evidence="41">
    <location>
        <begin position="18"/>
        <end position="21"/>
    </location>
</feature>
<protein>
    <recommendedName>
        <fullName evidence="34">Humanin</fullName>
    </recommendedName>
    <alternativeName>
        <fullName evidence="35">Humanin mitochondrial</fullName>
        <shortName evidence="35">HNM</shortName>
    </alternativeName>
</protein>
<gene>
    <name evidence="39" type="primary">MT-RNR2</name>
    <name evidence="34" type="synonym">HN</name>
</gene>
<geneLocation type="mitochondrion"/>
<keyword id="KW-0002">3D-structure</keyword>
<keyword id="KW-0053">Apoptosis</keyword>
<keyword id="KW-0966">Cell projection</keyword>
<keyword id="KW-0969">Cilium</keyword>
<keyword id="KW-0963">Cytoplasm</keyword>
<keyword id="KW-0282">Flagellum</keyword>
<keyword id="KW-0496">Mitochondrion</keyword>
<keyword id="KW-0539">Nucleus</keyword>
<keyword id="KW-1185">Reference proteome</keyword>
<keyword id="KW-0964">Secreted</keyword>
<accession>Q8IVG9</accession>
<dbReference type="EMBL" id="AY029066">
    <property type="protein sequence ID" value="AAK50430.1"/>
    <property type="molecule type" value="mRNA"/>
</dbReference>
<dbReference type="EMBL" id="BE899497">
    <property type="status" value="NOT_ANNOTATED_CDS"/>
    <property type="molecule type" value="mRNA"/>
</dbReference>
<dbReference type="PDB" id="1Y32">
    <property type="method" value="NMR"/>
    <property type="chains" value="A=1-24"/>
</dbReference>
<dbReference type="PDB" id="2GD3">
    <property type="method" value="NMR"/>
    <property type="chains" value="A=1-24"/>
</dbReference>
<dbReference type="PDB" id="5GIW">
    <property type="method" value="NMR"/>
    <property type="chains" value="X=1-24"/>
</dbReference>
<dbReference type="PDB" id="7WVX">
    <property type="method" value="EM"/>
    <property type="resolution" value="2.80 A"/>
    <property type="chains" value="L=1-24"/>
</dbReference>
<dbReference type="PDBsum" id="1Y32"/>
<dbReference type="PDBsum" id="2GD3"/>
<dbReference type="PDBsum" id="5GIW"/>
<dbReference type="PDBsum" id="7WVX"/>
<dbReference type="BMRB" id="Q8IVG9"/>
<dbReference type="EMDB" id="EMD-32861"/>
<dbReference type="SMR" id="Q8IVG9"/>
<dbReference type="FunCoup" id="Q8IVG9">
    <property type="interactions" value="5"/>
</dbReference>
<dbReference type="IntAct" id="Q8IVG9">
    <property type="interactions" value="3"/>
</dbReference>
<dbReference type="MINT" id="Q8IVG9"/>
<dbReference type="iPTMnet" id="Q8IVG9"/>
<dbReference type="PhosphoSitePlus" id="Q8IVG9"/>
<dbReference type="BioMuta" id="HGNC:7471"/>
<dbReference type="AGR" id="HGNC:7471"/>
<dbReference type="GeneCards" id="MT-RNR2"/>
<dbReference type="HGNC" id="HGNC:7471">
    <property type="gene designation" value="MT-RNR2"/>
</dbReference>
<dbReference type="MalaCards" id="MT-RNR2"/>
<dbReference type="MIM" id="561010">
    <property type="type" value="gene"/>
</dbReference>
<dbReference type="neXtProt" id="NX_Q8IVG9"/>
<dbReference type="InParanoid" id="Q8IVG9"/>
<dbReference type="PAN-GO" id="Q8IVG9">
    <property type="GO annotations" value="2 GO annotations based on evolutionary models"/>
</dbReference>
<dbReference type="PhylomeDB" id="Q8IVG9"/>
<dbReference type="PathwayCommons" id="Q8IVG9"/>
<dbReference type="Reactome" id="R-HSA-416476">
    <property type="pathway name" value="G alpha (q) signalling events"/>
</dbReference>
<dbReference type="Reactome" id="R-HSA-418594">
    <property type="pathway name" value="G alpha (i) signalling events"/>
</dbReference>
<dbReference type="Reactome" id="R-HSA-444473">
    <property type="pathway name" value="Formyl peptide receptors bind formyl peptides and many other ligands"/>
</dbReference>
<dbReference type="SignaLink" id="Q8IVG9"/>
<dbReference type="ChiTaRS" id="MT-RNR2">
    <property type="organism name" value="human"/>
</dbReference>
<dbReference type="EvolutionaryTrace" id="Q8IVG9"/>
<dbReference type="Pharos" id="Q8IVG9">
    <property type="development level" value="Tdark"/>
</dbReference>
<dbReference type="PRO" id="PR:Q8IVG9"/>
<dbReference type="Proteomes" id="UP000005640">
    <property type="component" value="Mitochondrion MT"/>
</dbReference>
<dbReference type="GO" id="GO:0005737">
    <property type="term" value="C:cytoplasm"/>
    <property type="evidence" value="ECO:0000314"/>
    <property type="project" value="UniProtKB"/>
</dbReference>
<dbReference type="GO" id="GO:0005576">
    <property type="term" value="C:extracellular region"/>
    <property type="evidence" value="ECO:0000314"/>
    <property type="project" value="UniProtKB"/>
</dbReference>
<dbReference type="GO" id="GO:0005615">
    <property type="term" value="C:extracellular space"/>
    <property type="evidence" value="ECO:0000314"/>
    <property type="project" value="UniProtKB"/>
</dbReference>
<dbReference type="GO" id="GO:0005739">
    <property type="term" value="C:mitochondrion"/>
    <property type="evidence" value="ECO:0000314"/>
    <property type="project" value="UniProtKB"/>
</dbReference>
<dbReference type="GO" id="GO:0005634">
    <property type="term" value="C:nucleus"/>
    <property type="evidence" value="ECO:0000314"/>
    <property type="project" value="UniProtKB"/>
</dbReference>
<dbReference type="GO" id="GO:0048471">
    <property type="term" value="C:perinuclear region of cytoplasm"/>
    <property type="evidence" value="ECO:0000314"/>
    <property type="project" value="UniProtKB"/>
</dbReference>
<dbReference type="GO" id="GO:0036126">
    <property type="term" value="C:sperm flagellum"/>
    <property type="evidence" value="ECO:0000314"/>
    <property type="project" value="UniProtKB"/>
</dbReference>
<dbReference type="GO" id="GO:0097225">
    <property type="term" value="C:sperm midpiece"/>
    <property type="evidence" value="ECO:0000314"/>
    <property type="project" value="UniProtKB"/>
</dbReference>
<dbReference type="GO" id="GO:0001664">
    <property type="term" value="F:G protein-coupled receptor binding"/>
    <property type="evidence" value="ECO:0000353"/>
    <property type="project" value="UniProtKB"/>
</dbReference>
<dbReference type="GO" id="GO:0042802">
    <property type="term" value="F:identical protein binding"/>
    <property type="evidence" value="ECO:0000353"/>
    <property type="project" value="UniProtKB"/>
</dbReference>
<dbReference type="GO" id="GO:0048019">
    <property type="term" value="F:receptor antagonist activity"/>
    <property type="evidence" value="ECO:0000314"/>
    <property type="project" value="UniProtKB"/>
</dbReference>
<dbReference type="GO" id="GO:0005102">
    <property type="term" value="F:signaling receptor binding"/>
    <property type="evidence" value="ECO:0000304"/>
    <property type="project" value="UniProtKB"/>
</dbReference>
<dbReference type="GO" id="GO:0006915">
    <property type="term" value="P:apoptotic process"/>
    <property type="evidence" value="ECO:0007669"/>
    <property type="project" value="UniProtKB-KW"/>
</dbReference>
<dbReference type="GO" id="GO:0007267">
    <property type="term" value="P:cell-cell signaling"/>
    <property type="evidence" value="ECO:0000314"/>
    <property type="project" value="UniProtKB"/>
</dbReference>
<dbReference type="GO" id="GO:1904646">
    <property type="term" value="P:cellular response to amyloid-beta"/>
    <property type="evidence" value="ECO:0000314"/>
    <property type="project" value="UniProtKB"/>
</dbReference>
<dbReference type="GO" id="GO:0006879">
    <property type="term" value="P:intracellular iron ion homeostasis"/>
    <property type="evidence" value="ECO:0000303"/>
    <property type="project" value="UniProtKB"/>
</dbReference>
<dbReference type="GO" id="GO:0030595">
    <property type="term" value="P:leukocyte chemotaxis"/>
    <property type="evidence" value="ECO:0000314"/>
    <property type="project" value="UniProtKB"/>
</dbReference>
<dbReference type="GO" id="GO:0007005">
    <property type="term" value="P:mitochondrion organization"/>
    <property type="evidence" value="ECO:0000314"/>
    <property type="project" value="UniProtKB"/>
</dbReference>
<dbReference type="GO" id="GO:1905907">
    <property type="term" value="P:negative regulation of amyloid fibril formation"/>
    <property type="evidence" value="ECO:0000314"/>
    <property type="project" value="UniProtKB"/>
</dbReference>
<dbReference type="GO" id="GO:0043066">
    <property type="term" value="P:negative regulation of apoptotic process"/>
    <property type="evidence" value="ECO:0000314"/>
    <property type="project" value="UniProtKB"/>
</dbReference>
<dbReference type="GO" id="GO:1900118">
    <property type="term" value="P:negative regulation of execution phase of apoptosis"/>
    <property type="evidence" value="ECO:0000318"/>
    <property type="project" value="GO_Central"/>
</dbReference>
<dbReference type="GO" id="GO:0050728">
    <property type="term" value="P:negative regulation of inflammatory response"/>
    <property type="evidence" value="ECO:0000314"/>
    <property type="project" value="UniProtKB"/>
</dbReference>
<dbReference type="GO" id="GO:0032692">
    <property type="term" value="P:negative regulation of interleukin-1 production"/>
    <property type="evidence" value="ECO:0000314"/>
    <property type="project" value="UniProtKB"/>
</dbReference>
<dbReference type="GO" id="GO:0032701">
    <property type="term" value="P:negative regulation of interleukin-18 production"/>
    <property type="evidence" value="ECO:0000314"/>
    <property type="project" value="UniProtKB"/>
</dbReference>
<dbReference type="GO" id="GO:0150079">
    <property type="term" value="P:negative regulation of neuroinflammatory response"/>
    <property type="evidence" value="ECO:0000314"/>
    <property type="project" value="UniProtKB"/>
</dbReference>
<dbReference type="GO" id="GO:0043524">
    <property type="term" value="P:negative regulation of neuron apoptotic process"/>
    <property type="evidence" value="ECO:0000314"/>
    <property type="project" value="UniProtKB"/>
</dbReference>
<dbReference type="GO" id="GO:1900226">
    <property type="term" value="P:negative regulation of NLRP3 inflammasome complex assembly"/>
    <property type="evidence" value="ECO:0000314"/>
    <property type="project" value="UniProtKB"/>
</dbReference>
<dbReference type="GO" id="GO:1902883">
    <property type="term" value="P:negative regulation of response to oxidative stress"/>
    <property type="evidence" value="ECO:0000314"/>
    <property type="project" value="UniProtKB"/>
</dbReference>
<dbReference type="GO" id="GO:0097435">
    <property type="term" value="P:supramolecular fiber organization"/>
    <property type="evidence" value="ECO:0000314"/>
    <property type="project" value="UniProtKB"/>
</dbReference>
<dbReference type="CDD" id="cd20245">
    <property type="entry name" value="humanin"/>
    <property type="match status" value="1"/>
</dbReference>
<dbReference type="DisProt" id="DP02267"/>
<dbReference type="InterPro" id="IPR028139">
    <property type="entry name" value="Humanin"/>
</dbReference>
<dbReference type="PANTHER" id="PTHR33895">
    <property type="entry name" value="HUMANIN-LIKE 4"/>
    <property type="match status" value="1"/>
</dbReference>
<dbReference type="PANTHER" id="PTHR33895:SF15">
    <property type="entry name" value="HUMANIN-RELATED"/>
    <property type="match status" value="1"/>
</dbReference>
<dbReference type="Pfam" id="PF15040">
    <property type="entry name" value="Humanin"/>
    <property type="match status" value="1"/>
</dbReference>
<organism>
    <name type="scientific">Homo sapiens</name>
    <name type="common">Human</name>
    <dbReference type="NCBI Taxonomy" id="9606"/>
    <lineage>
        <taxon>Eukaryota</taxon>
        <taxon>Metazoa</taxon>
        <taxon>Chordata</taxon>
        <taxon>Craniata</taxon>
        <taxon>Vertebrata</taxon>
        <taxon>Euteleostomi</taxon>
        <taxon>Mammalia</taxon>
        <taxon>Eutheria</taxon>
        <taxon>Euarchontoglires</taxon>
        <taxon>Primates</taxon>
        <taxon>Haplorrhini</taxon>
        <taxon>Catarrhini</taxon>
        <taxon>Hominidae</taxon>
        <taxon>Homo</taxon>
    </lineage>
</organism>